<accession>P05444</accession>
<evidence type="ECO:0000255" key="1"/>
<evidence type="ECO:0000255" key="2">
    <source>
        <dbReference type="PROSITE-ProRule" id="PRU01251"/>
    </source>
</evidence>
<evidence type="ECO:0000256" key="3">
    <source>
        <dbReference type="SAM" id="MobiDB-lite"/>
    </source>
</evidence>
<evidence type="ECO:0000305" key="4"/>
<name>CLPA_FUSBL</name>
<reference key="1">
    <citation type="journal article" date="1984" name="J. Mol. Biol.">
        <title>Rhodopseudomonas blastica atp operon. Nucleotide sequence and transcription.</title>
        <authorList>
            <person name="Tybulewicz V.L.J."/>
            <person name="Falk G."/>
            <person name="Walker J.E."/>
        </authorList>
    </citation>
    <scope>NUCLEOTIDE SEQUENCE [GENOMIC DNA]</scope>
</reference>
<keyword id="KW-0067">ATP-binding</keyword>
<keyword id="KW-0143">Chaperone</keyword>
<keyword id="KW-0547">Nucleotide-binding</keyword>
<keyword id="KW-0677">Repeat</keyword>
<feature type="chain" id="PRO_0000191082" description="ClpA homolog protein">
    <location>
        <begin position="1"/>
        <end position="793"/>
    </location>
</feature>
<feature type="domain" description="Clp R" evidence="2">
    <location>
        <begin position="22"/>
        <end position="168"/>
    </location>
</feature>
<feature type="region of interest" description="Disordered" evidence="3">
    <location>
        <begin position="1"/>
        <end position="24"/>
    </location>
</feature>
<feature type="region of interest" description="Repeat 1" evidence="2">
    <location>
        <begin position="25"/>
        <end position="88"/>
    </location>
</feature>
<feature type="region of interest" description="Repeat 2" evidence="2">
    <location>
        <begin position="103"/>
        <end position="168"/>
    </location>
</feature>
<feature type="region of interest" description="Disordered" evidence="3">
    <location>
        <begin position="169"/>
        <end position="194"/>
    </location>
</feature>
<feature type="region of interest" description="I">
    <location>
        <begin position="199"/>
        <end position="447"/>
    </location>
</feature>
<feature type="region of interest" description="II">
    <location>
        <begin position="451"/>
        <end position="639"/>
    </location>
</feature>
<feature type="compositionally biased region" description="Basic and acidic residues" evidence="3">
    <location>
        <begin position="185"/>
        <end position="194"/>
    </location>
</feature>
<feature type="binding site" evidence="1">
    <location>
        <begin position="244"/>
        <end position="251"/>
    </location>
    <ligand>
        <name>ATP</name>
        <dbReference type="ChEBI" id="CHEBI:30616"/>
    </ligand>
</feature>
<feature type="binding site" evidence="1">
    <location>
        <begin position="525"/>
        <end position="532"/>
    </location>
    <ligand>
        <name>ATP</name>
        <dbReference type="ChEBI" id="CHEBI:30616"/>
    </ligand>
</feature>
<proteinExistence type="inferred from homology"/>
<comment type="similarity">
    <text evidence="4">Belongs to the ClpA/ClpB family.</text>
</comment>
<dbReference type="EMBL" id="Z00018">
    <property type="protein sequence ID" value="CAA77308.1"/>
    <property type="molecule type" value="Genomic_DNA"/>
</dbReference>
<dbReference type="PIR" id="S04667">
    <property type="entry name" value="SURFCA"/>
</dbReference>
<dbReference type="SMR" id="P05444"/>
<dbReference type="MEROPS" id="X20.001"/>
<dbReference type="GO" id="GO:0005737">
    <property type="term" value="C:cytoplasm"/>
    <property type="evidence" value="ECO:0007669"/>
    <property type="project" value="TreeGrafter"/>
</dbReference>
<dbReference type="GO" id="GO:0005524">
    <property type="term" value="F:ATP binding"/>
    <property type="evidence" value="ECO:0007669"/>
    <property type="project" value="UniProtKB-KW"/>
</dbReference>
<dbReference type="GO" id="GO:0016887">
    <property type="term" value="F:ATP hydrolysis activity"/>
    <property type="evidence" value="ECO:0007669"/>
    <property type="project" value="InterPro"/>
</dbReference>
<dbReference type="GO" id="GO:0034605">
    <property type="term" value="P:cellular response to heat"/>
    <property type="evidence" value="ECO:0007669"/>
    <property type="project" value="TreeGrafter"/>
</dbReference>
<dbReference type="GO" id="GO:0043335">
    <property type="term" value="P:protein unfolding"/>
    <property type="evidence" value="ECO:0007669"/>
    <property type="project" value="InterPro"/>
</dbReference>
<dbReference type="CDD" id="cd00009">
    <property type="entry name" value="AAA"/>
    <property type="match status" value="1"/>
</dbReference>
<dbReference type="CDD" id="cd19499">
    <property type="entry name" value="RecA-like_ClpB_Hsp104-like"/>
    <property type="match status" value="1"/>
</dbReference>
<dbReference type="FunFam" id="3.40.50.300:FF:000025">
    <property type="entry name" value="ATP-dependent Clp protease subunit"/>
    <property type="match status" value="1"/>
</dbReference>
<dbReference type="FunFam" id="3.40.50.300:FF:000010">
    <property type="entry name" value="Chaperone clpB 1, putative"/>
    <property type="match status" value="1"/>
</dbReference>
<dbReference type="Gene3D" id="1.10.8.60">
    <property type="match status" value="2"/>
</dbReference>
<dbReference type="Gene3D" id="1.10.1780.10">
    <property type="entry name" value="Clp, N-terminal domain"/>
    <property type="match status" value="1"/>
</dbReference>
<dbReference type="Gene3D" id="3.40.50.300">
    <property type="entry name" value="P-loop containing nucleotide triphosphate hydrolases"/>
    <property type="match status" value="2"/>
</dbReference>
<dbReference type="InterPro" id="IPR003593">
    <property type="entry name" value="AAA+_ATPase"/>
</dbReference>
<dbReference type="InterPro" id="IPR003959">
    <property type="entry name" value="ATPase_AAA_core"/>
</dbReference>
<dbReference type="InterPro" id="IPR019489">
    <property type="entry name" value="Clp_ATPase_C"/>
</dbReference>
<dbReference type="InterPro" id="IPR036628">
    <property type="entry name" value="Clp_N_dom_sf"/>
</dbReference>
<dbReference type="InterPro" id="IPR004176">
    <property type="entry name" value="Clp_R_dom"/>
</dbReference>
<dbReference type="InterPro" id="IPR013461">
    <property type="entry name" value="ClpA"/>
</dbReference>
<dbReference type="InterPro" id="IPR001270">
    <property type="entry name" value="ClpA/B"/>
</dbReference>
<dbReference type="InterPro" id="IPR018368">
    <property type="entry name" value="ClpA/B_CS1"/>
</dbReference>
<dbReference type="InterPro" id="IPR028299">
    <property type="entry name" value="ClpA/B_CS2"/>
</dbReference>
<dbReference type="InterPro" id="IPR041546">
    <property type="entry name" value="ClpA/ClpB_AAA_lid"/>
</dbReference>
<dbReference type="InterPro" id="IPR050130">
    <property type="entry name" value="ClpA_ClpB"/>
</dbReference>
<dbReference type="InterPro" id="IPR027417">
    <property type="entry name" value="P-loop_NTPase"/>
</dbReference>
<dbReference type="NCBIfam" id="TIGR02639">
    <property type="entry name" value="ClpA"/>
    <property type="match status" value="1"/>
</dbReference>
<dbReference type="PANTHER" id="PTHR11638">
    <property type="entry name" value="ATP-DEPENDENT CLP PROTEASE"/>
    <property type="match status" value="1"/>
</dbReference>
<dbReference type="PANTHER" id="PTHR11638:SF111">
    <property type="entry name" value="ATP-DEPENDENT CLP PROTEASE ATP-BINDING SUBUNIT CLPA"/>
    <property type="match status" value="1"/>
</dbReference>
<dbReference type="Pfam" id="PF00004">
    <property type="entry name" value="AAA"/>
    <property type="match status" value="1"/>
</dbReference>
<dbReference type="Pfam" id="PF07724">
    <property type="entry name" value="AAA_2"/>
    <property type="match status" value="1"/>
</dbReference>
<dbReference type="Pfam" id="PF17871">
    <property type="entry name" value="AAA_lid_9"/>
    <property type="match status" value="1"/>
</dbReference>
<dbReference type="Pfam" id="PF02861">
    <property type="entry name" value="Clp_N"/>
    <property type="match status" value="1"/>
</dbReference>
<dbReference type="Pfam" id="PF10431">
    <property type="entry name" value="ClpB_D2-small"/>
    <property type="match status" value="1"/>
</dbReference>
<dbReference type="PRINTS" id="PR00300">
    <property type="entry name" value="CLPPROTEASEA"/>
</dbReference>
<dbReference type="SMART" id="SM00382">
    <property type="entry name" value="AAA"/>
    <property type="match status" value="2"/>
</dbReference>
<dbReference type="SMART" id="SM01086">
    <property type="entry name" value="ClpB_D2-small"/>
    <property type="match status" value="1"/>
</dbReference>
<dbReference type="SUPFAM" id="SSF81923">
    <property type="entry name" value="Double Clp-N motif"/>
    <property type="match status" value="1"/>
</dbReference>
<dbReference type="SUPFAM" id="SSF52540">
    <property type="entry name" value="P-loop containing nucleoside triphosphate hydrolases"/>
    <property type="match status" value="2"/>
</dbReference>
<dbReference type="PROSITE" id="PS51903">
    <property type="entry name" value="CLP_R"/>
    <property type="match status" value="1"/>
</dbReference>
<dbReference type="PROSITE" id="PS00870">
    <property type="entry name" value="CLPAB_1"/>
    <property type="match status" value="1"/>
</dbReference>
<dbReference type="PROSITE" id="PS00871">
    <property type="entry name" value="CLPAB_2"/>
    <property type="match status" value="1"/>
</dbReference>
<protein>
    <recommendedName>
        <fullName>ClpA homolog protein</fullName>
    </recommendedName>
</protein>
<sequence>MRPRSNAGSSPPDPEEQEHAQVPSFSSTLEQAIHAALALANARRHELATLEHLLLALIDEPDAARVMKACSVDLEDLKKTLTDFIDDDLSTLVTSVEGSEAVPTAAFQRVIQRAAIHVQSSGRTEVTGANVLVAIFAERESNAAYFLQEQDMTRYDAVNFIAHGVAKDPSYGESRPVQGADEPQETPKAEAGEAKESALSKYCVDLNIKARKGDVDPLIGREAEVERAIQVLCRRRKNNPLLVGDPGVGKTAIAEGLAWKIIKKEVPEVLSGATIFSLDMGALLAGTRYRGDFEERLKAVVKELEDHPDAILFIDEIHTVIGAGATSGGAMDASNLLKPALQGGKLRCMGSTTYKEFRQHFEKDRALSRRFQKIDVNEPSVPDAIKILMGLKPHFEEHHELRYTADAIKSAVELASRYINDRKLPDSAIDVIDEAGAAQHLVSDSKRKKVLGTKEIEAVVAKIARIPPRNVSKDDAETLRDLERTLKRLVFGQDKAIEALSASIKLARAGLREPEKPIGNYLFTGPTGVGKTEVAKQLAATLGVELLRFDMSEYMEKHAVSRLIGAPPGYVGFDQGGMLTDGVDQHPHCVLLLDEIEKAHPDVYNILLQVMDHGKLTDHNGRAVDFRNVILIMTSNVGAADMAKEAIGFGRERRTGEDTAAVERTFTPEFRNRLDAVISFAPLGREIILQVVEKFVLQLEAQLIDRNVHIELTPEAAAWLGEKGYDDKMGARPLGRVIQEHIKKPLAEELLFGKLTKGGLVKVGVKDDAIVLEVQEPQKPRLTGQKPPLLTAE</sequence>
<organism>
    <name type="scientific">Fuscovulum blasticum</name>
    <name type="common">Rhodobacter blasticus</name>
    <name type="synonym">Rhodopseudomonas blastica</name>
    <dbReference type="NCBI Taxonomy" id="1075"/>
    <lineage>
        <taxon>Bacteria</taxon>
        <taxon>Pseudomonadati</taxon>
        <taxon>Pseudomonadota</taxon>
        <taxon>Alphaproteobacteria</taxon>
        <taxon>Rhodobacterales</taxon>
        <taxon>Paracoccaceae</taxon>
        <taxon>Pseudogemmobacter</taxon>
    </lineage>
</organism>